<evidence type="ECO:0000250" key="1">
    <source>
        <dbReference type="UniProtKB" id="P28523"/>
    </source>
</evidence>
<evidence type="ECO:0000250" key="2">
    <source>
        <dbReference type="UniProtKB" id="Q6ZWH5"/>
    </source>
</evidence>
<evidence type="ECO:0000250" key="3">
    <source>
        <dbReference type="UniProtKB" id="Q8TD19"/>
    </source>
</evidence>
<evidence type="ECO:0000255" key="4"/>
<evidence type="ECO:0000255" key="5">
    <source>
        <dbReference type="PROSITE-ProRule" id="PRU00159"/>
    </source>
</evidence>
<evidence type="ECO:0000255" key="6">
    <source>
        <dbReference type="PROSITE-ProRule" id="PRU10028"/>
    </source>
</evidence>
<evidence type="ECO:0000256" key="7">
    <source>
        <dbReference type="SAM" id="MobiDB-lite"/>
    </source>
</evidence>
<evidence type="ECO:0000269" key="8">
    <source>
    </source>
</evidence>
<evidence type="ECO:0000269" key="9">
    <source>
    </source>
</evidence>
<evidence type="ECO:0000303" key="10">
    <source>
    </source>
</evidence>
<evidence type="ECO:0000305" key="11"/>
<evidence type="ECO:0000312" key="12">
    <source>
        <dbReference type="MGI" id="MGI:2685128"/>
    </source>
</evidence>
<gene>
    <name evidence="12" type="primary">Nek10</name>
    <name type="synonym">Gm282</name>
</gene>
<keyword id="KW-0025">Alternative splicing</keyword>
<keyword id="KW-0067">ATP-binding</keyword>
<keyword id="KW-0175">Coiled coil</keyword>
<keyword id="KW-0418">Kinase</keyword>
<keyword id="KW-0460">Magnesium</keyword>
<keyword id="KW-0479">Metal-binding</keyword>
<keyword id="KW-0547">Nucleotide-binding</keyword>
<keyword id="KW-1185">Reference proteome</keyword>
<keyword id="KW-0723">Serine/threonine-protein kinase</keyword>
<keyword id="KW-0808">Transferase</keyword>
<feature type="chain" id="PRO_0000283794" description="Serine/threonine-protein kinase Nek10">
    <location>
        <begin position="1"/>
        <end position="1111"/>
    </location>
</feature>
<feature type="domain" description="Protein kinase" evidence="5">
    <location>
        <begin position="519"/>
        <end position="791"/>
    </location>
</feature>
<feature type="region of interest" description="Disordered" evidence="7">
    <location>
        <begin position="1"/>
        <end position="24"/>
    </location>
</feature>
<feature type="region of interest" description="Disordered" evidence="7">
    <location>
        <begin position="47"/>
        <end position="72"/>
    </location>
</feature>
<feature type="coiled-coil region" evidence="4">
    <location>
        <begin position="481"/>
        <end position="514"/>
    </location>
</feature>
<feature type="compositionally biased region" description="Basic and acidic residues" evidence="7">
    <location>
        <begin position="1"/>
        <end position="16"/>
    </location>
</feature>
<feature type="compositionally biased region" description="Polar residues" evidence="7">
    <location>
        <begin position="47"/>
        <end position="63"/>
    </location>
</feature>
<feature type="active site" description="Proton acceptor" evidence="1 5 6">
    <location>
        <position position="655"/>
    </location>
</feature>
<feature type="binding site" evidence="1 5">
    <location>
        <begin position="525"/>
        <end position="533"/>
    </location>
    <ligand>
        <name>ATP</name>
        <dbReference type="ChEBI" id="CHEBI:30616"/>
    </ligand>
</feature>
<feature type="binding site" evidence="3 5">
    <location>
        <position position="548"/>
    </location>
    <ligand>
        <name>ATP</name>
        <dbReference type="ChEBI" id="CHEBI:30616"/>
    </ligand>
</feature>
<feature type="splice variant" id="VSP_052352" description="In isoform 2." evidence="10">
    <location>
        <begin position="1"/>
        <end position="603"/>
    </location>
</feature>
<feature type="splice variant" id="VSP_052353" description="In isoform 2." evidence="10">
    <original>GPQMSTFVVESASAGIAVSQRKVRQICDPIQQILIQLHKVIYITQLPPALH</original>
    <variation>ALLPLHLLGKVPHQCPGTT</variation>
    <location>
        <begin position="957"/>
        <end position="1007"/>
    </location>
</feature>
<reference key="1">
    <citation type="journal article" date="2005" name="Science">
        <title>The transcriptional landscape of the mammalian genome.</title>
        <authorList>
            <person name="Carninci P."/>
            <person name="Kasukawa T."/>
            <person name="Katayama S."/>
            <person name="Gough J."/>
            <person name="Frith M.C."/>
            <person name="Maeda N."/>
            <person name="Oyama R."/>
            <person name="Ravasi T."/>
            <person name="Lenhard B."/>
            <person name="Wells C."/>
            <person name="Kodzius R."/>
            <person name="Shimokawa K."/>
            <person name="Bajic V.B."/>
            <person name="Brenner S.E."/>
            <person name="Batalov S."/>
            <person name="Forrest A.R."/>
            <person name="Zavolan M."/>
            <person name="Davis M.J."/>
            <person name="Wilming L.G."/>
            <person name="Aidinis V."/>
            <person name="Allen J.E."/>
            <person name="Ambesi-Impiombato A."/>
            <person name="Apweiler R."/>
            <person name="Aturaliya R.N."/>
            <person name="Bailey T.L."/>
            <person name="Bansal M."/>
            <person name="Baxter L."/>
            <person name="Beisel K.W."/>
            <person name="Bersano T."/>
            <person name="Bono H."/>
            <person name="Chalk A.M."/>
            <person name="Chiu K.P."/>
            <person name="Choudhary V."/>
            <person name="Christoffels A."/>
            <person name="Clutterbuck D.R."/>
            <person name="Crowe M.L."/>
            <person name="Dalla E."/>
            <person name="Dalrymple B.P."/>
            <person name="de Bono B."/>
            <person name="Della Gatta G."/>
            <person name="di Bernardo D."/>
            <person name="Down T."/>
            <person name="Engstrom P."/>
            <person name="Fagiolini M."/>
            <person name="Faulkner G."/>
            <person name="Fletcher C.F."/>
            <person name="Fukushima T."/>
            <person name="Furuno M."/>
            <person name="Futaki S."/>
            <person name="Gariboldi M."/>
            <person name="Georgii-Hemming P."/>
            <person name="Gingeras T.R."/>
            <person name="Gojobori T."/>
            <person name="Green R.E."/>
            <person name="Gustincich S."/>
            <person name="Harbers M."/>
            <person name="Hayashi Y."/>
            <person name="Hensch T.K."/>
            <person name="Hirokawa N."/>
            <person name="Hill D."/>
            <person name="Huminiecki L."/>
            <person name="Iacono M."/>
            <person name="Ikeo K."/>
            <person name="Iwama A."/>
            <person name="Ishikawa T."/>
            <person name="Jakt M."/>
            <person name="Kanapin A."/>
            <person name="Katoh M."/>
            <person name="Kawasawa Y."/>
            <person name="Kelso J."/>
            <person name="Kitamura H."/>
            <person name="Kitano H."/>
            <person name="Kollias G."/>
            <person name="Krishnan S.P."/>
            <person name="Kruger A."/>
            <person name="Kummerfeld S.K."/>
            <person name="Kurochkin I.V."/>
            <person name="Lareau L.F."/>
            <person name="Lazarevic D."/>
            <person name="Lipovich L."/>
            <person name="Liu J."/>
            <person name="Liuni S."/>
            <person name="McWilliam S."/>
            <person name="Madan Babu M."/>
            <person name="Madera M."/>
            <person name="Marchionni L."/>
            <person name="Matsuda H."/>
            <person name="Matsuzawa S."/>
            <person name="Miki H."/>
            <person name="Mignone F."/>
            <person name="Miyake S."/>
            <person name="Morris K."/>
            <person name="Mottagui-Tabar S."/>
            <person name="Mulder N."/>
            <person name="Nakano N."/>
            <person name="Nakauchi H."/>
            <person name="Ng P."/>
            <person name="Nilsson R."/>
            <person name="Nishiguchi S."/>
            <person name="Nishikawa S."/>
            <person name="Nori F."/>
            <person name="Ohara O."/>
            <person name="Okazaki Y."/>
            <person name="Orlando V."/>
            <person name="Pang K.C."/>
            <person name="Pavan W.J."/>
            <person name="Pavesi G."/>
            <person name="Pesole G."/>
            <person name="Petrovsky N."/>
            <person name="Piazza S."/>
            <person name="Reed J."/>
            <person name="Reid J.F."/>
            <person name="Ring B.Z."/>
            <person name="Ringwald M."/>
            <person name="Rost B."/>
            <person name="Ruan Y."/>
            <person name="Salzberg S.L."/>
            <person name="Sandelin A."/>
            <person name="Schneider C."/>
            <person name="Schoenbach C."/>
            <person name="Sekiguchi K."/>
            <person name="Semple C.A."/>
            <person name="Seno S."/>
            <person name="Sessa L."/>
            <person name="Sheng Y."/>
            <person name="Shibata Y."/>
            <person name="Shimada H."/>
            <person name="Shimada K."/>
            <person name="Silva D."/>
            <person name="Sinclair B."/>
            <person name="Sperling S."/>
            <person name="Stupka E."/>
            <person name="Sugiura K."/>
            <person name="Sultana R."/>
            <person name="Takenaka Y."/>
            <person name="Taki K."/>
            <person name="Tammoja K."/>
            <person name="Tan S.L."/>
            <person name="Tang S."/>
            <person name="Taylor M.S."/>
            <person name="Tegner J."/>
            <person name="Teichmann S.A."/>
            <person name="Ueda H.R."/>
            <person name="van Nimwegen E."/>
            <person name="Verardo R."/>
            <person name="Wei C.L."/>
            <person name="Yagi K."/>
            <person name="Yamanishi H."/>
            <person name="Zabarovsky E."/>
            <person name="Zhu S."/>
            <person name="Zimmer A."/>
            <person name="Hide W."/>
            <person name="Bult C."/>
            <person name="Grimmond S.M."/>
            <person name="Teasdale R.D."/>
            <person name="Liu E.T."/>
            <person name="Brusic V."/>
            <person name="Quackenbush J."/>
            <person name="Wahlestedt C."/>
            <person name="Mattick J.S."/>
            <person name="Hume D.A."/>
            <person name="Kai C."/>
            <person name="Sasaki D."/>
            <person name="Tomaru Y."/>
            <person name="Fukuda S."/>
            <person name="Kanamori-Katayama M."/>
            <person name="Suzuki M."/>
            <person name="Aoki J."/>
            <person name="Arakawa T."/>
            <person name="Iida J."/>
            <person name="Imamura K."/>
            <person name="Itoh M."/>
            <person name="Kato T."/>
            <person name="Kawaji H."/>
            <person name="Kawagashira N."/>
            <person name="Kawashima T."/>
            <person name="Kojima M."/>
            <person name="Kondo S."/>
            <person name="Konno H."/>
            <person name="Nakano K."/>
            <person name="Ninomiya N."/>
            <person name="Nishio T."/>
            <person name="Okada M."/>
            <person name="Plessy C."/>
            <person name="Shibata K."/>
            <person name="Shiraki T."/>
            <person name="Suzuki S."/>
            <person name="Tagami M."/>
            <person name="Waki K."/>
            <person name="Watahiki A."/>
            <person name="Okamura-Oho Y."/>
            <person name="Suzuki H."/>
            <person name="Kawai J."/>
            <person name="Hayashizaki Y."/>
        </authorList>
    </citation>
    <scope>NUCLEOTIDE SEQUENCE [LARGE SCALE MRNA] (ISOFORM 2)</scope>
    <source>
        <strain>C57BL/6J</strain>
        <tissue>Melanocyte</tissue>
    </source>
</reference>
<reference key="2">
    <citation type="journal article" date="2009" name="PLoS Biol.">
        <title>Lineage-specific biology revealed by a finished genome assembly of the mouse.</title>
        <authorList>
            <person name="Church D.M."/>
            <person name="Goodstadt L."/>
            <person name="Hillier L.W."/>
            <person name="Zody M.C."/>
            <person name="Goldstein S."/>
            <person name="She X."/>
            <person name="Bult C.J."/>
            <person name="Agarwala R."/>
            <person name="Cherry J.L."/>
            <person name="DiCuccio M."/>
            <person name="Hlavina W."/>
            <person name="Kapustin Y."/>
            <person name="Meric P."/>
            <person name="Maglott D."/>
            <person name="Birtle Z."/>
            <person name="Marques A.C."/>
            <person name="Graves T."/>
            <person name="Zhou S."/>
            <person name="Teague B."/>
            <person name="Potamousis K."/>
            <person name="Churas C."/>
            <person name="Place M."/>
            <person name="Herschleb J."/>
            <person name="Runnheim R."/>
            <person name="Forrest D."/>
            <person name="Amos-Landgraf J."/>
            <person name="Schwartz D.C."/>
            <person name="Cheng Z."/>
            <person name="Lindblad-Toh K."/>
            <person name="Eichler E.E."/>
            <person name="Ponting C.P."/>
        </authorList>
    </citation>
    <scope>NUCLEOTIDE SEQUENCE [LARGE SCALE GENOMIC DNA]</scope>
    <source>
        <strain>C57BL/6J</strain>
    </source>
</reference>
<reference key="3">
    <citation type="journal article" date="2011" name="Mol. Cell. Biol.">
        <title>Nek10 mediates G2/M cell cycle arrest and MEK autoactivation in response to UV irradiation.</title>
        <authorList>
            <person name="Moniz L.S."/>
            <person name="Stambolic V."/>
        </authorList>
    </citation>
    <scope>TISSUE SPECIFICITY</scope>
</reference>
<comment type="function">
    <text evidence="2">Plays a role in the cellular response to UV irradiation. Mediates G2/M cell cycle arrest, MEK autoactivation and ERK1/2-signaling pathway activation in response to UV irradiation. In ciliated cells, it is involved in the regulation of mucociliary transport.</text>
</comment>
<comment type="catalytic activity">
    <reaction evidence="3">
        <text>L-seryl-[protein] + ATP = O-phospho-L-seryl-[protein] + ADP + H(+)</text>
        <dbReference type="Rhea" id="RHEA:17989"/>
        <dbReference type="Rhea" id="RHEA-COMP:9863"/>
        <dbReference type="Rhea" id="RHEA-COMP:11604"/>
        <dbReference type="ChEBI" id="CHEBI:15378"/>
        <dbReference type="ChEBI" id="CHEBI:29999"/>
        <dbReference type="ChEBI" id="CHEBI:30616"/>
        <dbReference type="ChEBI" id="CHEBI:83421"/>
        <dbReference type="ChEBI" id="CHEBI:456216"/>
        <dbReference type="EC" id="2.7.11.1"/>
    </reaction>
</comment>
<comment type="catalytic activity">
    <reaction evidence="3">
        <text>L-threonyl-[protein] + ATP = O-phospho-L-threonyl-[protein] + ADP + H(+)</text>
        <dbReference type="Rhea" id="RHEA:46608"/>
        <dbReference type="Rhea" id="RHEA-COMP:11060"/>
        <dbReference type="Rhea" id="RHEA-COMP:11605"/>
        <dbReference type="ChEBI" id="CHEBI:15378"/>
        <dbReference type="ChEBI" id="CHEBI:30013"/>
        <dbReference type="ChEBI" id="CHEBI:30616"/>
        <dbReference type="ChEBI" id="CHEBI:61977"/>
        <dbReference type="ChEBI" id="CHEBI:456216"/>
        <dbReference type="EC" id="2.7.11.1"/>
    </reaction>
</comment>
<comment type="cofactor">
    <cofactor evidence="3">
        <name>Mg(2+)</name>
        <dbReference type="ChEBI" id="CHEBI:18420"/>
    </cofactor>
</comment>
<comment type="subunit">
    <text evidence="2">Interacts with RAF1 and MAP2K1; the interaction is direct with RAF1 and required for ERK1/2-signaling pathway activation in response to UV irradiation.</text>
</comment>
<comment type="alternative products">
    <event type="alternative splicing"/>
    <isoform>
        <id>Q3UGM2-1</id>
        <name evidence="11">1</name>
        <sequence type="displayed"/>
    </isoform>
    <isoform>
        <id>Q3UGM2-2</id>
        <name evidence="8">2</name>
        <sequence type="described" ref="VSP_052352 VSP_052353"/>
    </isoform>
</comment>
<comment type="tissue specificity">
    <text evidence="9">Expressed in the mammary gland, lung, spleen, and kidney.</text>
</comment>
<comment type="similarity">
    <text evidence="11">Belongs to the protein kinase superfamily. NEK Ser/Thr protein kinase family. NIMA subfamily.</text>
</comment>
<sequence>MPDQDTKAKSTEKTADKQQGTTTRDYSDLKRLRCLLNVQSSKQQLPAINFDSAQNNMTKSEPTIRTGGHRARGQWHESTEAVELENFSINYKNERNFSKHPQHQLFQEIFTALVRNRLICREWVNRAPSIHFLRVLICLRLLMRDPCYQEILHKLGGIEDLAQYMEIVANEYLGYAEEQHCVDKLVNMTYIFQKLAAVKDQREWVTASGAHKTLVSLLGARDTTVLLGALLALASLAESSECREKISELNVVENLLMILHEYDLLSKRLTAELLRLLCAEPQIKEQVKLYEGIPILLSLLHSDHLKLLWSVIWILVQVCEDPETSVEIRIWGGIKQLLHILQGDRNFVSDRSSIGSLSSANAAGRIQQLHLSEDLSPGEIEENTVSLQAACCAALTELALNDTNAHQVVQENGVYTIAKLILPNKQSNAAQTNLLQCYAFRTLRFLFSMERNRPLFKRLFPTDLFETFIDIGHYVRDIGAYKDLVSQLNLLLEDELKQIAENIESINQKKAPLKYIGDYAVLDHLGSGAFGCVYKVRKRSGQNLLAMKEVNLHNPAFGKDKKDRDSSVKNIVSELTIIKEQLYHPNVVRYYKTFLENDRLYIVMELIEGAPLGEHFNSLKEKHHHFSEERLWKIFIQLCLALRYLHKEKRIVHRDLTPNNIMLGDKDKVTVTDFGLAKQKQESSKLTSMVGTILYSCPEVLKSEPYGEKADVWAAGCILYQMATLSPPFCSTNMLSLATKIVEAVYEPVPEGIYSEKVTDTIRRCLTPDAEARPDIVEVSSMISDVMMKYLDRLSTSQLALERKLERERRRTQRYFMEANRNAVTCHHELALLSQETFEKASLSSSSSGAASLKSELSESAELPGEGCHIPCGKEEDRVCEEVLSEDNFQLESVEKDLYSELDDELDVSDNCSSSSSSPLKESTFSILKRSFSASGRERHSQARDFIAGLGSRPRPGPQMSTFVVESASAGIAVSQRKVRQICDPIQQILIQLHKVIYITQLPPALHHDLKRRVIERFKKSLFSQQSNPCNLKSEIKKLSQGSPEPIELNFLTSDYHSLRHSRAANNWSPSDPTGSPSSFEVEEGVTYEQMQTVIEEVLEESGYYNFTTKR</sequence>
<organism>
    <name type="scientific">Mus musculus</name>
    <name type="common">Mouse</name>
    <dbReference type="NCBI Taxonomy" id="10090"/>
    <lineage>
        <taxon>Eukaryota</taxon>
        <taxon>Metazoa</taxon>
        <taxon>Chordata</taxon>
        <taxon>Craniata</taxon>
        <taxon>Vertebrata</taxon>
        <taxon>Euteleostomi</taxon>
        <taxon>Mammalia</taxon>
        <taxon>Eutheria</taxon>
        <taxon>Euarchontoglires</taxon>
        <taxon>Glires</taxon>
        <taxon>Rodentia</taxon>
        <taxon>Myomorpha</taxon>
        <taxon>Muroidea</taxon>
        <taxon>Muridae</taxon>
        <taxon>Murinae</taxon>
        <taxon>Mus</taxon>
        <taxon>Mus</taxon>
    </lineage>
</organism>
<proteinExistence type="evidence at transcript level"/>
<name>NEK10_MOUSE</name>
<protein>
    <recommendedName>
        <fullName evidence="11">Serine/threonine-protein kinase Nek10</fullName>
        <ecNumber>2.7.11.1</ecNumber>
    </recommendedName>
    <alternativeName>
        <fullName>Never in mitosis A-related kinase 10</fullName>
        <shortName>NimA-related protein kinase 10</shortName>
    </alternativeName>
</protein>
<dbReference type="EC" id="2.7.11.1"/>
<dbReference type="EMBL" id="AK147862">
    <property type="protein sequence ID" value="BAE28185.1"/>
    <property type="molecule type" value="mRNA"/>
</dbReference>
<dbReference type="EMBL" id="AC129580">
    <property type="status" value="NOT_ANNOTATED_CDS"/>
    <property type="molecule type" value="Genomic_DNA"/>
</dbReference>
<dbReference type="RefSeq" id="NP_001182158.1">
    <property type="nucleotide sequence ID" value="NM_001195229.1"/>
</dbReference>
<dbReference type="SMR" id="Q3UGM2"/>
<dbReference type="BioGRID" id="586574">
    <property type="interactions" value="2"/>
</dbReference>
<dbReference type="FunCoup" id="Q3UGM2">
    <property type="interactions" value="304"/>
</dbReference>
<dbReference type="STRING" id="10090.ENSMUSP00000153142"/>
<dbReference type="PhosphoSitePlus" id="Q3UGM2"/>
<dbReference type="PaxDb" id="10090-ENSMUSP00000108249"/>
<dbReference type="ProteomicsDB" id="287473">
    <molecule id="Q3UGM2-1"/>
</dbReference>
<dbReference type="ProteomicsDB" id="287474">
    <molecule id="Q3UGM2-2"/>
</dbReference>
<dbReference type="Antibodypedia" id="27441">
    <property type="antibodies" value="72 antibodies from 24 providers"/>
</dbReference>
<dbReference type="Ensembl" id="ENSMUST00000112631.9">
    <molecule id="Q3UGM2-1"/>
    <property type="protein sequence ID" value="ENSMUSP00000108250.3"/>
    <property type="gene ID" value="ENSMUSG00000042567.21"/>
</dbReference>
<dbReference type="GeneID" id="674895"/>
<dbReference type="KEGG" id="mmu:674895"/>
<dbReference type="UCSC" id="uc007sgs.2">
    <molecule id="Q3UGM2-2"/>
    <property type="organism name" value="mouse"/>
</dbReference>
<dbReference type="AGR" id="MGI:2685128"/>
<dbReference type="CTD" id="152110"/>
<dbReference type="MGI" id="MGI:2685128">
    <property type="gene designation" value="Nek10"/>
</dbReference>
<dbReference type="VEuPathDB" id="HostDB:ENSMUSG00000042567"/>
<dbReference type="eggNOG" id="KOG0589">
    <property type="taxonomic scope" value="Eukaryota"/>
</dbReference>
<dbReference type="GeneTree" id="ENSGT00940000161037"/>
<dbReference type="InParanoid" id="Q3UGM2"/>
<dbReference type="OrthoDB" id="248923at2759"/>
<dbReference type="PhylomeDB" id="Q3UGM2"/>
<dbReference type="BioGRID-ORCS" id="674895">
    <property type="hits" value="0 hits in 78 CRISPR screens"/>
</dbReference>
<dbReference type="ChiTaRS" id="Nek10">
    <property type="organism name" value="mouse"/>
</dbReference>
<dbReference type="PRO" id="PR:Q3UGM2"/>
<dbReference type="Proteomes" id="UP000000589">
    <property type="component" value="Chromosome 14"/>
</dbReference>
<dbReference type="RNAct" id="Q3UGM2">
    <property type="molecule type" value="protein"/>
</dbReference>
<dbReference type="Bgee" id="ENSMUSG00000042567">
    <property type="expression patterns" value="Expressed in secondary oocyte and 20 other cell types or tissues"/>
</dbReference>
<dbReference type="ExpressionAtlas" id="Q3UGM2">
    <property type="expression patterns" value="baseline and differential"/>
</dbReference>
<dbReference type="GO" id="GO:0005576">
    <property type="term" value="C:extracellular region"/>
    <property type="evidence" value="ECO:0007669"/>
    <property type="project" value="GOC"/>
</dbReference>
<dbReference type="GO" id="GO:0005524">
    <property type="term" value="F:ATP binding"/>
    <property type="evidence" value="ECO:0007669"/>
    <property type="project" value="UniProtKB-KW"/>
</dbReference>
<dbReference type="GO" id="GO:0046872">
    <property type="term" value="F:metal ion binding"/>
    <property type="evidence" value="ECO:0007669"/>
    <property type="project" value="UniProtKB-KW"/>
</dbReference>
<dbReference type="GO" id="GO:0106310">
    <property type="term" value="F:protein serine kinase activity"/>
    <property type="evidence" value="ECO:0007669"/>
    <property type="project" value="RHEA"/>
</dbReference>
<dbReference type="GO" id="GO:0004674">
    <property type="term" value="F:protein serine/threonine kinase activity"/>
    <property type="evidence" value="ECO:0007669"/>
    <property type="project" value="UniProtKB-KW"/>
</dbReference>
<dbReference type="GO" id="GO:0120197">
    <property type="term" value="P:mucociliary clearance"/>
    <property type="evidence" value="ECO:0000250"/>
    <property type="project" value="UniProtKB"/>
</dbReference>
<dbReference type="CDD" id="cd08528">
    <property type="entry name" value="STKc_Nek10"/>
    <property type="match status" value="1"/>
</dbReference>
<dbReference type="FunFam" id="1.25.10.10:FF:000612">
    <property type="entry name" value="Serine/threonine-protein kinase Nek10"/>
    <property type="match status" value="1"/>
</dbReference>
<dbReference type="FunFam" id="1.10.510.10:FF:001213">
    <property type="entry name" value="serine/threonine-protein kinase Nek10"/>
    <property type="match status" value="1"/>
</dbReference>
<dbReference type="FunFam" id="3.30.200.20:FF:000339">
    <property type="entry name" value="serine/threonine-protein kinase Nek10"/>
    <property type="match status" value="1"/>
</dbReference>
<dbReference type="Gene3D" id="1.25.10.10">
    <property type="entry name" value="Leucine-rich Repeat Variant"/>
    <property type="match status" value="2"/>
</dbReference>
<dbReference type="Gene3D" id="3.30.200.20">
    <property type="entry name" value="Phosphorylase Kinase, domain 1"/>
    <property type="match status" value="1"/>
</dbReference>
<dbReference type="Gene3D" id="1.10.510.10">
    <property type="entry name" value="Transferase(Phosphotransferase) domain 1"/>
    <property type="match status" value="1"/>
</dbReference>
<dbReference type="InterPro" id="IPR011989">
    <property type="entry name" value="ARM-like"/>
</dbReference>
<dbReference type="InterPro" id="IPR016024">
    <property type="entry name" value="ARM-type_fold"/>
</dbReference>
<dbReference type="InterPro" id="IPR000225">
    <property type="entry name" value="Armadillo"/>
</dbReference>
<dbReference type="InterPro" id="IPR011009">
    <property type="entry name" value="Kinase-like_dom_sf"/>
</dbReference>
<dbReference type="InterPro" id="IPR042666">
    <property type="entry name" value="Nek10_STKc"/>
</dbReference>
<dbReference type="InterPro" id="IPR050660">
    <property type="entry name" value="NEK_Ser/Thr_kinase"/>
</dbReference>
<dbReference type="InterPro" id="IPR000719">
    <property type="entry name" value="Prot_kinase_dom"/>
</dbReference>
<dbReference type="InterPro" id="IPR017441">
    <property type="entry name" value="Protein_kinase_ATP_BS"/>
</dbReference>
<dbReference type="InterPro" id="IPR008266">
    <property type="entry name" value="Tyr_kinase_AS"/>
</dbReference>
<dbReference type="PANTHER" id="PTHR43671">
    <property type="entry name" value="SERINE/THREONINE-PROTEIN KINASE NEK"/>
    <property type="match status" value="1"/>
</dbReference>
<dbReference type="PANTHER" id="PTHR43671:SF92">
    <property type="entry name" value="SERINE_THREONINE-PROTEIN KINASE NEK10"/>
    <property type="match status" value="1"/>
</dbReference>
<dbReference type="Pfam" id="PF00069">
    <property type="entry name" value="Pkinase"/>
    <property type="match status" value="1"/>
</dbReference>
<dbReference type="SMART" id="SM00185">
    <property type="entry name" value="ARM"/>
    <property type="match status" value="4"/>
</dbReference>
<dbReference type="SUPFAM" id="SSF48371">
    <property type="entry name" value="ARM repeat"/>
    <property type="match status" value="1"/>
</dbReference>
<dbReference type="SUPFAM" id="SSF56112">
    <property type="entry name" value="Protein kinase-like (PK-like)"/>
    <property type="match status" value="1"/>
</dbReference>
<dbReference type="PROSITE" id="PS00107">
    <property type="entry name" value="PROTEIN_KINASE_ATP"/>
    <property type="match status" value="1"/>
</dbReference>
<dbReference type="PROSITE" id="PS50011">
    <property type="entry name" value="PROTEIN_KINASE_DOM"/>
    <property type="match status" value="1"/>
</dbReference>
<dbReference type="PROSITE" id="PS00109">
    <property type="entry name" value="PROTEIN_KINASE_TYR"/>
    <property type="match status" value="1"/>
</dbReference>
<accession>Q3UGM2</accession>